<keyword id="KW-0878">Amphibian defense peptide</keyword>
<keyword id="KW-0044">Antibiotic</keyword>
<keyword id="KW-0929">Antimicrobial</keyword>
<keyword id="KW-0903">Direct protein sequencing</keyword>
<keyword id="KW-0964">Secreted</keyword>
<organism>
    <name type="scientific">Sylvirana guentheri</name>
    <name type="common">Gunther's frog</name>
    <name type="synonym">Rana guentheri</name>
    <dbReference type="NCBI Taxonomy" id="110109"/>
    <lineage>
        <taxon>Eukaryota</taxon>
        <taxon>Metazoa</taxon>
        <taxon>Chordata</taxon>
        <taxon>Craniata</taxon>
        <taxon>Vertebrata</taxon>
        <taxon>Euteleostomi</taxon>
        <taxon>Amphibia</taxon>
        <taxon>Batrachia</taxon>
        <taxon>Anura</taxon>
        <taxon>Neobatrachia</taxon>
        <taxon>Ranoidea</taxon>
        <taxon>Ranidae</taxon>
        <taxon>Sylvirana</taxon>
    </lineage>
</organism>
<evidence type="ECO:0000269" key="1">
    <source>
    </source>
</evidence>
<evidence type="ECO:0000305" key="2"/>
<accession>P84859</accession>
<protein>
    <recommendedName>
        <fullName>Guentherin</fullName>
    </recommendedName>
    <alternativeName>
        <fullName>AMP-3</fullName>
    </alternativeName>
</protein>
<proteinExistence type="evidence at protein level"/>
<feature type="peptide" id="PRO_0000271189" description="Guentherin" evidence="1">
    <location>
        <begin position="1"/>
        <end position="26"/>
    </location>
</feature>
<name>GUEN_SYLGU</name>
<comment type="function">
    <text evidence="1">Antimicrobial peptide. Active against the Gram-positive bacteria S.aureus FDA209P (MIC=35.5 ug/ml) and B.subtilis ATCC 6633 (MIC&gt;64 ug/ml), but not active against the Gram-negative bacterium E.coli or the fungus C.albicans.</text>
</comment>
<comment type="subcellular location">
    <subcellularLocation>
        <location evidence="1">Secreted</location>
    </subcellularLocation>
</comment>
<comment type="tissue specificity">
    <text evidence="1">Expressed by the skin glands.</text>
</comment>
<comment type="mass spectrometry"/>
<reference evidence="2" key="1">
    <citation type="journal article" date="2006" name="Peptides">
        <title>Purification and characterization of novel antimicrobial peptides from the skin secretion of Hylarana guentheri.</title>
        <authorList>
            <person name="Zhou J."/>
            <person name="McClean S."/>
            <person name="Thompson A."/>
            <person name="Zhang Y."/>
            <person name="Shaw C."/>
            <person name="Rao P."/>
            <person name="Bjourson A.J."/>
        </authorList>
    </citation>
    <scope>PROTEIN SEQUENCE</scope>
    <scope>FUNCTION</scope>
    <scope>SUBCELLULAR LOCATION</scope>
    <scope>TISSUE SPECIFICITY</scope>
    <scope>MASS SPECTROMETRY</scope>
    <source>
        <tissue evidence="1">Skin secretion</tissue>
    </source>
</reference>
<sequence>VIDDLKKVAKKVRRELLCKKHHKKLN</sequence>
<dbReference type="GO" id="GO:0005576">
    <property type="term" value="C:extracellular region"/>
    <property type="evidence" value="ECO:0007669"/>
    <property type="project" value="UniProtKB-SubCell"/>
</dbReference>
<dbReference type="GO" id="GO:0042742">
    <property type="term" value="P:defense response to bacterium"/>
    <property type="evidence" value="ECO:0007669"/>
    <property type="project" value="UniProtKB-KW"/>
</dbReference>